<feature type="chain" id="PRO_0000160914" description="Quinone oxidoreductase-like protein 1">
    <location>
        <begin position="1"/>
        <end position="348"/>
    </location>
</feature>
<feature type="splice variant" id="VSP_000209" description="In isoform 2." evidence="2">
    <original>VRLYSK</original>
    <variation>GLEADV</variation>
    <location>
        <begin position="226"/>
        <end position="231"/>
    </location>
</feature>
<feature type="splice variant" id="VSP_000210" description="In isoform 2." evidence="2">
    <location>
        <begin position="232"/>
        <end position="348"/>
    </location>
</feature>
<feature type="sequence conflict" description="In Ref. 2; AAH19387." evidence="3" ref="2">
    <location>
        <begin position="154"/>
        <end position="155"/>
    </location>
</feature>
<evidence type="ECO:0000250" key="1">
    <source>
        <dbReference type="UniProtKB" id="O95825"/>
    </source>
</evidence>
<evidence type="ECO:0000303" key="2">
    <source>
    </source>
</evidence>
<evidence type="ECO:0000305" key="3"/>
<organism>
    <name type="scientific">Mus musculus</name>
    <name type="common">Mouse</name>
    <dbReference type="NCBI Taxonomy" id="10090"/>
    <lineage>
        <taxon>Eukaryota</taxon>
        <taxon>Metazoa</taxon>
        <taxon>Chordata</taxon>
        <taxon>Craniata</taxon>
        <taxon>Vertebrata</taxon>
        <taxon>Euteleostomi</taxon>
        <taxon>Mammalia</taxon>
        <taxon>Eutheria</taxon>
        <taxon>Euarchontoglires</taxon>
        <taxon>Glires</taxon>
        <taxon>Rodentia</taxon>
        <taxon>Myomorpha</taxon>
        <taxon>Muroidea</taxon>
        <taxon>Muridae</taxon>
        <taxon>Murinae</taxon>
        <taxon>Mus</taxon>
        <taxon>Mus</taxon>
    </lineage>
</organism>
<proteinExistence type="evidence at protein level"/>
<dbReference type="EC" id="1.-.-.-"/>
<dbReference type="EMBL" id="AK010433">
    <property type="protein sequence ID" value="BAB26935.1"/>
    <property type="molecule type" value="mRNA"/>
</dbReference>
<dbReference type="EMBL" id="AK145827">
    <property type="protein sequence ID" value="BAE26679.1"/>
    <property type="molecule type" value="mRNA"/>
</dbReference>
<dbReference type="EMBL" id="BC010479">
    <property type="protein sequence ID" value="AAH10479.1"/>
    <property type="molecule type" value="mRNA"/>
</dbReference>
<dbReference type="EMBL" id="BC019387">
    <property type="protein sequence ID" value="AAH19387.1"/>
    <property type="molecule type" value="mRNA"/>
</dbReference>
<dbReference type="CCDS" id="CCDS37401.1">
    <molecule id="Q921W4-1"/>
</dbReference>
<dbReference type="RefSeq" id="NP_598440.1">
    <molecule id="Q921W4-1"/>
    <property type="nucleotide sequence ID" value="NM_133679.2"/>
</dbReference>
<dbReference type="SMR" id="Q921W4"/>
<dbReference type="BioGRID" id="211592">
    <property type="interactions" value="1"/>
</dbReference>
<dbReference type="FunCoup" id="Q921W4">
    <property type="interactions" value="2680"/>
</dbReference>
<dbReference type="STRING" id="10090.ENSMUSP00000073171"/>
<dbReference type="PhosphoSitePlus" id="Q921W4"/>
<dbReference type="SwissPalm" id="Q921W4"/>
<dbReference type="PaxDb" id="10090-ENSMUSP00000073171"/>
<dbReference type="PeptideAtlas" id="Q921W4"/>
<dbReference type="ProteomicsDB" id="301904">
    <molecule id="Q921W4-1"/>
</dbReference>
<dbReference type="ProteomicsDB" id="301905">
    <molecule id="Q921W4-2"/>
</dbReference>
<dbReference type="Pumba" id="Q921W4"/>
<dbReference type="Antibodypedia" id="7498">
    <property type="antibodies" value="282 antibodies from 23 providers"/>
</dbReference>
<dbReference type="DNASU" id="66609"/>
<dbReference type="Ensembl" id="ENSMUST00000073466.13">
    <molecule id="Q921W4-1"/>
    <property type="protein sequence ID" value="ENSMUSP00000073171.7"/>
    <property type="gene ID" value="ENSMUSG00000058240.15"/>
</dbReference>
<dbReference type="Ensembl" id="ENSMUST00000114023.3">
    <molecule id="Q921W4-2"/>
    <property type="protein sequence ID" value="ENSMUSP00000109656.3"/>
    <property type="gene ID" value="ENSMUSG00000058240.15"/>
</dbReference>
<dbReference type="GeneID" id="66609"/>
<dbReference type="KEGG" id="mmu:66609"/>
<dbReference type="UCSC" id="uc007zyf.2">
    <molecule id="Q921W4-1"/>
    <property type="organism name" value="mouse"/>
</dbReference>
<dbReference type="AGR" id="MGI:1913859"/>
<dbReference type="CTD" id="9946"/>
<dbReference type="MGI" id="MGI:1913859">
    <property type="gene designation" value="Cryzl1"/>
</dbReference>
<dbReference type="VEuPathDB" id="HostDB:ENSMUSG00000058240"/>
<dbReference type="eggNOG" id="KOG1198">
    <property type="taxonomic scope" value="Eukaryota"/>
</dbReference>
<dbReference type="GeneTree" id="ENSGT00390000013113"/>
<dbReference type="HOGENOM" id="CLU_026673_21_5_1"/>
<dbReference type="InParanoid" id="Q921W4"/>
<dbReference type="OMA" id="AHHWGAK"/>
<dbReference type="OrthoDB" id="9930022at2759"/>
<dbReference type="PhylomeDB" id="Q921W4"/>
<dbReference type="TreeFam" id="TF328922"/>
<dbReference type="BioGRID-ORCS" id="66609">
    <property type="hits" value="2 hits in 76 CRISPR screens"/>
</dbReference>
<dbReference type="ChiTaRS" id="Cryzl1">
    <property type="organism name" value="mouse"/>
</dbReference>
<dbReference type="PRO" id="PR:Q921W4"/>
<dbReference type="Proteomes" id="UP000000589">
    <property type="component" value="Chromosome 16"/>
</dbReference>
<dbReference type="RNAct" id="Q921W4">
    <property type="molecule type" value="protein"/>
</dbReference>
<dbReference type="Bgee" id="ENSMUSG00000058240">
    <property type="expression patterns" value="Expressed in sciatic nerve and 269 other cell types or tissues"/>
</dbReference>
<dbReference type="ExpressionAtlas" id="Q921W4">
    <property type="expression patterns" value="baseline and differential"/>
</dbReference>
<dbReference type="GO" id="GO:0005769">
    <property type="term" value="C:early endosome"/>
    <property type="evidence" value="ECO:0000250"/>
    <property type="project" value="UniProtKB"/>
</dbReference>
<dbReference type="GO" id="GO:0042802">
    <property type="term" value="F:identical protein binding"/>
    <property type="evidence" value="ECO:0007669"/>
    <property type="project" value="Ensembl"/>
</dbReference>
<dbReference type="GO" id="GO:0016491">
    <property type="term" value="F:oxidoreductase activity"/>
    <property type="evidence" value="ECO:0007669"/>
    <property type="project" value="UniProtKB-KW"/>
</dbReference>
<dbReference type="CDD" id="cd05195">
    <property type="entry name" value="enoyl_red"/>
    <property type="match status" value="1"/>
</dbReference>
<dbReference type="Gene3D" id="3.90.180.10">
    <property type="entry name" value="Medium-chain alcohol dehydrogenases, catalytic domain"/>
    <property type="match status" value="1"/>
</dbReference>
<dbReference type="InterPro" id="IPR013154">
    <property type="entry name" value="ADH-like_N"/>
</dbReference>
<dbReference type="InterPro" id="IPR042633">
    <property type="entry name" value="CRYZL1"/>
</dbReference>
<dbReference type="InterPro" id="IPR011032">
    <property type="entry name" value="GroES-like_sf"/>
</dbReference>
<dbReference type="InterPro" id="IPR036291">
    <property type="entry name" value="NAD(P)-bd_dom_sf"/>
</dbReference>
<dbReference type="InterPro" id="IPR020843">
    <property type="entry name" value="PKS_ER"/>
</dbReference>
<dbReference type="PANTHER" id="PTHR44461">
    <property type="entry name" value="QUINONE OXIDOREDUCTASE-LIKE PROTEIN 1"/>
    <property type="match status" value="1"/>
</dbReference>
<dbReference type="PANTHER" id="PTHR44461:SF1">
    <property type="entry name" value="QUINONE OXIDOREDUCTASE-LIKE PROTEIN 1"/>
    <property type="match status" value="1"/>
</dbReference>
<dbReference type="Pfam" id="PF08240">
    <property type="entry name" value="ADH_N"/>
    <property type="match status" value="1"/>
</dbReference>
<dbReference type="SMART" id="SM00829">
    <property type="entry name" value="PKS_ER"/>
    <property type="match status" value="1"/>
</dbReference>
<dbReference type="SUPFAM" id="SSF50129">
    <property type="entry name" value="GroES-like"/>
    <property type="match status" value="1"/>
</dbReference>
<dbReference type="SUPFAM" id="SSF51735">
    <property type="entry name" value="NAD(P)-binding Rossmann-fold domains"/>
    <property type="match status" value="1"/>
</dbReference>
<sequence length="348" mass="38725">MKGLYFQQSSTNEEVTFVFQEKENVPVTEDNFVRVQVKACALSHINTKLLAEMKMEKDFFPVGREVSGIVLEVGRKVTFFQPDDEVVGILPLDSEDPGLCEVIRVHEHYLVHKPEKVSWTEAAGVIRDGVRACTALYYLSQLSPGKSVLIMDGASAFGTIAIQLAHHRGAKVISTAHSLEDKQHLERLRPSIARVIDVSNGKVHVAESCLEETGGLGVDIVIDAGVRLYSKDDEPAVKLHLPHKHDIITLLGVGGHWVTTEENLQLDPPDSHCLFLKGATVAFLNDEVWNLSNAQQGKYLCILKDVMEKLSAGVFRPLLDEPIPLYEAKVSMEVVQKNQERKKQVVQF</sequence>
<accession>Q921W4</accession>
<accession>Q3UKX2</accession>
<accession>Q8VCS1</accession>
<accession>Q9CWR9</accession>
<gene>
    <name type="primary">Cryzl1</name>
</gene>
<reference key="1">
    <citation type="journal article" date="2005" name="Science">
        <title>The transcriptional landscape of the mammalian genome.</title>
        <authorList>
            <person name="Carninci P."/>
            <person name="Kasukawa T."/>
            <person name="Katayama S."/>
            <person name="Gough J."/>
            <person name="Frith M.C."/>
            <person name="Maeda N."/>
            <person name="Oyama R."/>
            <person name="Ravasi T."/>
            <person name="Lenhard B."/>
            <person name="Wells C."/>
            <person name="Kodzius R."/>
            <person name="Shimokawa K."/>
            <person name="Bajic V.B."/>
            <person name="Brenner S.E."/>
            <person name="Batalov S."/>
            <person name="Forrest A.R."/>
            <person name="Zavolan M."/>
            <person name="Davis M.J."/>
            <person name="Wilming L.G."/>
            <person name="Aidinis V."/>
            <person name="Allen J.E."/>
            <person name="Ambesi-Impiombato A."/>
            <person name="Apweiler R."/>
            <person name="Aturaliya R.N."/>
            <person name="Bailey T.L."/>
            <person name="Bansal M."/>
            <person name="Baxter L."/>
            <person name="Beisel K.W."/>
            <person name="Bersano T."/>
            <person name="Bono H."/>
            <person name="Chalk A.M."/>
            <person name="Chiu K.P."/>
            <person name="Choudhary V."/>
            <person name="Christoffels A."/>
            <person name="Clutterbuck D.R."/>
            <person name="Crowe M.L."/>
            <person name="Dalla E."/>
            <person name="Dalrymple B.P."/>
            <person name="de Bono B."/>
            <person name="Della Gatta G."/>
            <person name="di Bernardo D."/>
            <person name="Down T."/>
            <person name="Engstrom P."/>
            <person name="Fagiolini M."/>
            <person name="Faulkner G."/>
            <person name="Fletcher C.F."/>
            <person name="Fukushima T."/>
            <person name="Furuno M."/>
            <person name="Futaki S."/>
            <person name="Gariboldi M."/>
            <person name="Georgii-Hemming P."/>
            <person name="Gingeras T.R."/>
            <person name="Gojobori T."/>
            <person name="Green R.E."/>
            <person name="Gustincich S."/>
            <person name="Harbers M."/>
            <person name="Hayashi Y."/>
            <person name="Hensch T.K."/>
            <person name="Hirokawa N."/>
            <person name="Hill D."/>
            <person name="Huminiecki L."/>
            <person name="Iacono M."/>
            <person name="Ikeo K."/>
            <person name="Iwama A."/>
            <person name="Ishikawa T."/>
            <person name="Jakt M."/>
            <person name="Kanapin A."/>
            <person name="Katoh M."/>
            <person name="Kawasawa Y."/>
            <person name="Kelso J."/>
            <person name="Kitamura H."/>
            <person name="Kitano H."/>
            <person name="Kollias G."/>
            <person name="Krishnan S.P."/>
            <person name="Kruger A."/>
            <person name="Kummerfeld S.K."/>
            <person name="Kurochkin I.V."/>
            <person name="Lareau L.F."/>
            <person name="Lazarevic D."/>
            <person name="Lipovich L."/>
            <person name="Liu J."/>
            <person name="Liuni S."/>
            <person name="McWilliam S."/>
            <person name="Madan Babu M."/>
            <person name="Madera M."/>
            <person name="Marchionni L."/>
            <person name="Matsuda H."/>
            <person name="Matsuzawa S."/>
            <person name="Miki H."/>
            <person name="Mignone F."/>
            <person name="Miyake S."/>
            <person name="Morris K."/>
            <person name="Mottagui-Tabar S."/>
            <person name="Mulder N."/>
            <person name="Nakano N."/>
            <person name="Nakauchi H."/>
            <person name="Ng P."/>
            <person name="Nilsson R."/>
            <person name="Nishiguchi S."/>
            <person name="Nishikawa S."/>
            <person name="Nori F."/>
            <person name="Ohara O."/>
            <person name="Okazaki Y."/>
            <person name="Orlando V."/>
            <person name="Pang K.C."/>
            <person name="Pavan W.J."/>
            <person name="Pavesi G."/>
            <person name="Pesole G."/>
            <person name="Petrovsky N."/>
            <person name="Piazza S."/>
            <person name="Reed J."/>
            <person name="Reid J.F."/>
            <person name="Ring B.Z."/>
            <person name="Ringwald M."/>
            <person name="Rost B."/>
            <person name="Ruan Y."/>
            <person name="Salzberg S.L."/>
            <person name="Sandelin A."/>
            <person name="Schneider C."/>
            <person name="Schoenbach C."/>
            <person name="Sekiguchi K."/>
            <person name="Semple C.A."/>
            <person name="Seno S."/>
            <person name="Sessa L."/>
            <person name="Sheng Y."/>
            <person name="Shibata Y."/>
            <person name="Shimada H."/>
            <person name="Shimada K."/>
            <person name="Silva D."/>
            <person name="Sinclair B."/>
            <person name="Sperling S."/>
            <person name="Stupka E."/>
            <person name="Sugiura K."/>
            <person name="Sultana R."/>
            <person name="Takenaka Y."/>
            <person name="Taki K."/>
            <person name="Tammoja K."/>
            <person name="Tan S.L."/>
            <person name="Tang S."/>
            <person name="Taylor M.S."/>
            <person name="Tegner J."/>
            <person name="Teichmann S.A."/>
            <person name="Ueda H.R."/>
            <person name="van Nimwegen E."/>
            <person name="Verardo R."/>
            <person name="Wei C.L."/>
            <person name="Yagi K."/>
            <person name="Yamanishi H."/>
            <person name="Zabarovsky E."/>
            <person name="Zhu S."/>
            <person name="Zimmer A."/>
            <person name="Hide W."/>
            <person name="Bult C."/>
            <person name="Grimmond S.M."/>
            <person name="Teasdale R.D."/>
            <person name="Liu E.T."/>
            <person name="Brusic V."/>
            <person name="Quackenbush J."/>
            <person name="Wahlestedt C."/>
            <person name="Mattick J.S."/>
            <person name="Hume D.A."/>
            <person name="Kai C."/>
            <person name="Sasaki D."/>
            <person name="Tomaru Y."/>
            <person name="Fukuda S."/>
            <person name="Kanamori-Katayama M."/>
            <person name="Suzuki M."/>
            <person name="Aoki J."/>
            <person name="Arakawa T."/>
            <person name="Iida J."/>
            <person name="Imamura K."/>
            <person name="Itoh M."/>
            <person name="Kato T."/>
            <person name="Kawaji H."/>
            <person name="Kawagashira N."/>
            <person name="Kawashima T."/>
            <person name="Kojima M."/>
            <person name="Kondo S."/>
            <person name="Konno H."/>
            <person name="Nakano K."/>
            <person name="Ninomiya N."/>
            <person name="Nishio T."/>
            <person name="Okada M."/>
            <person name="Plessy C."/>
            <person name="Shibata K."/>
            <person name="Shiraki T."/>
            <person name="Suzuki S."/>
            <person name="Tagami M."/>
            <person name="Waki K."/>
            <person name="Watahiki A."/>
            <person name="Okamura-Oho Y."/>
            <person name="Suzuki H."/>
            <person name="Kawai J."/>
            <person name="Hayashizaki Y."/>
        </authorList>
    </citation>
    <scope>NUCLEOTIDE SEQUENCE [LARGE SCALE MRNA] (ISOFORMS 1 AND 2)</scope>
    <source>
        <strain>C57BL/6J</strain>
        <tissue>Embryonic stem cell</tissue>
        <tissue>Placenta</tissue>
    </source>
</reference>
<reference key="2">
    <citation type="journal article" date="2004" name="Genome Res.">
        <title>The status, quality, and expansion of the NIH full-length cDNA project: the Mammalian Gene Collection (MGC).</title>
        <authorList>
            <consortium name="The MGC Project Team"/>
        </authorList>
    </citation>
    <scope>NUCLEOTIDE SEQUENCE [LARGE SCALE MRNA] (ISOFORM 1)</scope>
    <source>
        <tissue>Mammary tumor</tissue>
        <tissue>Salivary gland</tissue>
    </source>
</reference>
<reference key="3">
    <citation type="journal article" date="2010" name="Cell">
        <title>A tissue-specific atlas of mouse protein phosphorylation and expression.</title>
        <authorList>
            <person name="Huttlin E.L."/>
            <person name="Jedrychowski M.P."/>
            <person name="Elias J.E."/>
            <person name="Goswami T."/>
            <person name="Rad R."/>
            <person name="Beausoleil S.A."/>
            <person name="Villen J."/>
            <person name="Haas W."/>
            <person name="Sowa M.E."/>
            <person name="Gygi S.P."/>
        </authorList>
    </citation>
    <scope>IDENTIFICATION BY MASS SPECTROMETRY [LARGE SCALE ANALYSIS]</scope>
    <source>
        <tissue>Brain</tissue>
        <tissue>Kidney</tissue>
        <tissue>Lung</tissue>
        <tissue>Spleen</tissue>
        <tissue>Testis</tissue>
    </source>
</reference>
<keyword id="KW-0025">Alternative splicing</keyword>
<keyword id="KW-0967">Endosome</keyword>
<keyword id="KW-0521">NADP</keyword>
<keyword id="KW-0560">Oxidoreductase</keyword>
<keyword id="KW-1185">Reference proteome</keyword>
<protein>
    <recommendedName>
        <fullName>Quinone oxidoreductase-like protein 1</fullName>
        <ecNumber>1.-.-.-</ecNumber>
    </recommendedName>
    <alternativeName>
        <fullName evidence="1">Ferry endosomal RAB5 effector complex subunit 4</fullName>
    </alternativeName>
    <alternativeName>
        <fullName>Quinone oxidoreductase homolog 1</fullName>
        <shortName>QOH-1</shortName>
    </alternativeName>
    <alternativeName>
        <fullName>Zeta-crystallin homolog</fullName>
    </alternativeName>
</protein>
<name>QORL1_MOUSE</name>
<comment type="function">
    <text evidence="1">Component of the FERRY complex (Five-subunit Endosomal Rab5 and RNA/ribosome intermediary). The FERRY complex directly interacts with mRNAs and RAB5A, and functions as a RAB5A effector involved in the localization and the distribution of specific mRNAs most likely by mediating their endosomal transport. The complex recruits mRNAs and ribosomes to early endosomes through direct mRNA-interaction.</text>
</comment>
<comment type="subunit">
    <text evidence="1">Component of the FERRY complex composed of five subunits, TBCK, PPP1R21, FERRY3, CRYZL1 and GATD1 with a ratio of 1:2:1:2:4, respectively.</text>
</comment>
<comment type="subcellular location">
    <subcellularLocation>
        <location evidence="1">Early endosome</location>
    </subcellularLocation>
</comment>
<comment type="alternative products">
    <event type="alternative splicing"/>
    <isoform>
        <id>Q921W4-1</id>
        <name>1</name>
        <sequence type="displayed"/>
    </isoform>
    <isoform>
        <id>Q921W4-2</id>
        <name>2</name>
        <sequence type="described" ref="VSP_000209 VSP_000210"/>
    </isoform>
</comment>
<comment type="similarity">
    <text evidence="3">Belongs to the zinc-containing alcohol dehydrogenase family. Quinone oxidoreductase subfamily.</text>
</comment>